<sequence length="59" mass="6867">MKIIREELKKLSSKIELLEAGMIQEEEISEEEAKELDRLVEETKKNGIPWEKLKAELGL</sequence>
<keyword id="KW-1185">Reference proteome</keyword>
<feature type="chain" id="PRO_0000128048" description="Uncharacterized protein AF_1713">
    <location>
        <begin position="1"/>
        <end position="59"/>
    </location>
</feature>
<proteinExistence type="predicted"/>
<dbReference type="EMBL" id="AE000782">
    <property type="protein sequence ID" value="AAB89543.1"/>
    <property type="molecule type" value="Genomic_DNA"/>
</dbReference>
<dbReference type="PIR" id="H69463">
    <property type="entry name" value="H69463"/>
</dbReference>
<dbReference type="SMR" id="O28560"/>
<dbReference type="STRING" id="224325.AF_1713"/>
<dbReference type="PaxDb" id="224325-AF_1713"/>
<dbReference type="EnsemblBacteria" id="AAB89543">
    <property type="protein sequence ID" value="AAB89543"/>
    <property type="gene ID" value="AF_1713"/>
</dbReference>
<dbReference type="KEGG" id="afu:AF_1713"/>
<dbReference type="eggNOG" id="arCOG09828">
    <property type="taxonomic scope" value="Archaea"/>
</dbReference>
<dbReference type="HOGENOM" id="CLU_2695499_0_0_2"/>
<dbReference type="Proteomes" id="UP000002199">
    <property type="component" value="Chromosome"/>
</dbReference>
<gene>
    <name type="ordered locus">AF_1713</name>
</gene>
<accession>O28560</accession>
<protein>
    <recommendedName>
        <fullName>Uncharacterized protein AF_1713</fullName>
    </recommendedName>
</protein>
<reference key="1">
    <citation type="journal article" date="1997" name="Nature">
        <title>The complete genome sequence of the hyperthermophilic, sulphate-reducing archaeon Archaeoglobus fulgidus.</title>
        <authorList>
            <person name="Klenk H.-P."/>
            <person name="Clayton R.A."/>
            <person name="Tomb J.-F."/>
            <person name="White O."/>
            <person name="Nelson K.E."/>
            <person name="Ketchum K.A."/>
            <person name="Dodson R.J."/>
            <person name="Gwinn M.L."/>
            <person name="Hickey E.K."/>
            <person name="Peterson J.D."/>
            <person name="Richardson D.L."/>
            <person name="Kerlavage A.R."/>
            <person name="Graham D.E."/>
            <person name="Kyrpides N.C."/>
            <person name="Fleischmann R.D."/>
            <person name="Quackenbush J."/>
            <person name="Lee N.H."/>
            <person name="Sutton G.G."/>
            <person name="Gill S.R."/>
            <person name="Kirkness E.F."/>
            <person name="Dougherty B.A."/>
            <person name="McKenney K."/>
            <person name="Adams M.D."/>
            <person name="Loftus B.J."/>
            <person name="Peterson S.N."/>
            <person name="Reich C.I."/>
            <person name="McNeil L.K."/>
            <person name="Badger J.H."/>
            <person name="Glodek A."/>
            <person name="Zhou L."/>
            <person name="Overbeek R."/>
            <person name="Gocayne J.D."/>
            <person name="Weidman J.F."/>
            <person name="McDonald L.A."/>
            <person name="Utterback T.R."/>
            <person name="Cotton M.D."/>
            <person name="Spriggs T."/>
            <person name="Artiach P."/>
            <person name="Kaine B.P."/>
            <person name="Sykes S.M."/>
            <person name="Sadow P.W."/>
            <person name="D'Andrea K.P."/>
            <person name="Bowman C."/>
            <person name="Fujii C."/>
            <person name="Garland S.A."/>
            <person name="Mason T.M."/>
            <person name="Olsen G.J."/>
            <person name="Fraser C.M."/>
            <person name="Smith H.O."/>
            <person name="Woese C.R."/>
            <person name="Venter J.C."/>
        </authorList>
    </citation>
    <scope>NUCLEOTIDE SEQUENCE [LARGE SCALE GENOMIC DNA]</scope>
    <source>
        <strain>ATCC 49558 / DSM 4304 / JCM 9628 / NBRC 100126 / VC-16</strain>
    </source>
</reference>
<organism>
    <name type="scientific">Archaeoglobus fulgidus (strain ATCC 49558 / DSM 4304 / JCM 9628 / NBRC 100126 / VC-16)</name>
    <dbReference type="NCBI Taxonomy" id="224325"/>
    <lineage>
        <taxon>Archaea</taxon>
        <taxon>Methanobacteriati</taxon>
        <taxon>Methanobacteriota</taxon>
        <taxon>Archaeoglobi</taxon>
        <taxon>Archaeoglobales</taxon>
        <taxon>Archaeoglobaceae</taxon>
        <taxon>Archaeoglobus</taxon>
    </lineage>
</organism>
<name>Y1713_ARCFU</name>